<dbReference type="EMBL" id="CP001164">
    <property type="protein sequence ID" value="ACI37750.1"/>
    <property type="molecule type" value="Genomic_DNA"/>
</dbReference>
<dbReference type="RefSeq" id="WP_000439331.1">
    <property type="nucleotide sequence ID" value="NC_011353.1"/>
</dbReference>
<dbReference type="KEGG" id="ecf:ECH74115_4314"/>
<dbReference type="HOGENOM" id="CLU_097887_1_1_6"/>
<dbReference type="GO" id="GO:0005886">
    <property type="term" value="C:plasma membrane"/>
    <property type="evidence" value="ECO:0007669"/>
    <property type="project" value="UniProtKB-SubCell"/>
</dbReference>
<dbReference type="HAMAP" id="MF_00143">
    <property type="entry name" value="UPF0114"/>
    <property type="match status" value="1"/>
</dbReference>
<dbReference type="InterPro" id="IPR005134">
    <property type="entry name" value="UPF0114"/>
</dbReference>
<dbReference type="InterPro" id="IPR020761">
    <property type="entry name" value="UPF0114_bac"/>
</dbReference>
<dbReference type="NCBIfam" id="TIGR00645">
    <property type="entry name" value="HI0507"/>
    <property type="match status" value="1"/>
</dbReference>
<dbReference type="PANTHER" id="PTHR38596">
    <property type="entry name" value="UPF0114 PROTEIN YQHA"/>
    <property type="match status" value="1"/>
</dbReference>
<dbReference type="PANTHER" id="PTHR38596:SF1">
    <property type="entry name" value="UPF0114 PROTEIN YQHA"/>
    <property type="match status" value="1"/>
</dbReference>
<dbReference type="Pfam" id="PF03350">
    <property type="entry name" value="UPF0114"/>
    <property type="match status" value="1"/>
</dbReference>
<sequence>MERFLENAMYASRWLLAPVYFGLSLALVALALKFFQEIIHVLPNIFSMAESDLILVLLSLVDMTLVGGLLVMVMFSGYENFVSQLDISENKEKLNWLGKMDATSLKNKVAASIVAISSIHLLRVFMDAKNVPDNKLMWYVIIHLTFVLSAFVMGYLDRLTRHNH</sequence>
<evidence type="ECO:0000255" key="1">
    <source>
        <dbReference type="HAMAP-Rule" id="MF_00143"/>
    </source>
</evidence>
<name>YQHA_ECO5E</name>
<organism>
    <name type="scientific">Escherichia coli O157:H7 (strain EC4115 / EHEC)</name>
    <dbReference type="NCBI Taxonomy" id="444450"/>
    <lineage>
        <taxon>Bacteria</taxon>
        <taxon>Pseudomonadati</taxon>
        <taxon>Pseudomonadota</taxon>
        <taxon>Gammaproteobacteria</taxon>
        <taxon>Enterobacterales</taxon>
        <taxon>Enterobacteriaceae</taxon>
        <taxon>Escherichia</taxon>
    </lineage>
</organism>
<comment type="subcellular location">
    <subcellularLocation>
        <location evidence="1">Cell membrane</location>
        <topology evidence="1">Multi-pass membrane protein</topology>
    </subcellularLocation>
</comment>
<comment type="similarity">
    <text evidence="1">Belongs to the UPF0114 family.</text>
</comment>
<protein>
    <recommendedName>
        <fullName evidence="1">UPF0114 protein YqhA</fullName>
    </recommendedName>
</protein>
<accession>B5YR48</accession>
<gene>
    <name evidence="1" type="primary">yqhA</name>
    <name type="ordered locus">ECH74115_4314</name>
</gene>
<feature type="chain" id="PRO_1000096264" description="UPF0114 protein YqhA">
    <location>
        <begin position="1"/>
        <end position="164"/>
    </location>
</feature>
<feature type="transmembrane region" description="Helical" evidence="1">
    <location>
        <begin position="15"/>
        <end position="35"/>
    </location>
</feature>
<feature type="transmembrane region" description="Helical" evidence="1">
    <location>
        <begin position="53"/>
        <end position="73"/>
    </location>
</feature>
<feature type="transmembrane region" description="Helical" evidence="1">
    <location>
        <begin position="136"/>
        <end position="156"/>
    </location>
</feature>
<proteinExistence type="inferred from homology"/>
<keyword id="KW-1003">Cell membrane</keyword>
<keyword id="KW-0472">Membrane</keyword>
<keyword id="KW-0812">Transmembrane</keyword>
<keyword id="KW-1133">Transmembrane helix</keyword>
<reference key="1">
    <citation type="journal article" date="2011" name="Proc. Natl. Acad. Sci. U.S.A.">
        <title>Genomic anatomy of Escherichia coli O157:H7 outbreaks.</title>
        <authorList>
            <person name="Eppinger M."/>
            <person name="Mammel M.K."/>
            <person name="Leclerc J.E."/>
            <person name="Ravel J."/>
            <person name="Cebula T.A."/>
        </authorList>
    </citation>
    <scope>NUCLEOTIDE SEQUENCE [LARGE SCALE GENOMIC DNA]</scope>
    <source>
        <strain>EC4115 / EHEC</strain>
    </source>
</reference>